<feature type="chain" id="PRO_0000287498" description="TBC1 domain family member 23">
    <location>
        <begin position="1"/>
        <end position="684"/>
    </location>
</feature>
<feature type="domain" description="Rab-GAP TBC" evidence="2">
    <location>
        <begin position="44"/>
        <end position="225"/>
    </location>
</feature>
<feature type="domain" description="Rhodanese" evidence="3">
    <location>
        <begin position="334"/>
        <end position="446"/>
    </location>
</feature>
<feature type="region of interest" description="May mediate the interaction with WASHC1" evidence="6">
    <location>
        <begin position="514"/>
        <end position="684"/>
    </location>
</feature>
<feature type="region of interest" description="May mediate the interaction with C17orf75, FAM91A1 and WDR11" evidence="6">
    <location>
        <begin position="514"/>
        <end position="558"/>
    </location>
</feature>
<feature type="region of interest" description="May mediate the interaction with FKBP15 and WASHC2; required for endosome to Golgi trafficking" evidence="6">
    <location>
        <begin position="559"/>
        <end position="684"/>
    </location>
</feature>
<feature type="modified residue" description="Phosphoserine" evidence="1">
    <location>
        <position position="300"/>
    </location>
</feature>
<feature type="modified residue" description="Phosphoserine" evidence="8">
    <location>
        <position position="469"/>
    </location>
</feature>
<feature type="modified residue" description="Phosphoserine" evidence="1">
    <location>
        <position position="474"/>
    </location>
</feature>
<feature type="modified residue" description="Phosphoserine" evidence="1">
    <location>
        <position position="507"/>
    </location>
</feature>
<feature type="modified residue" description="Phosphothreonine" evidence="1">
    <location>
        <position position="514"/>
    </location>
</feature>
<feature type="modified residue" description="Phosphoserine" evidence="1">
    <location>
        <position position="556"/>
    </location>
</feature>
<feature type="splice variant" id="VSP_025520" description="In isoform 2." evidence="7">
    <original>LGS</original>
    <variation>VIK</variation>
    <location>
        <begin position="201"/>
        <end position="203"/>
    </location>
</feature>
<feature type="splice variant" id="VSP_025521" description="In isoform 2." evidence="7">
    <location>
        <begin position="204"/>
        <end position="684"/>
    </location>
</feature>
<feature type="mutagenesis site" description="Fails to inhibit LPS-induced cytokine production." evidence="4">
    <original>R</original>
    <variation>A</variation>
    <location>
        <position position="50"/>
    </location>
</feature>
<gene>
    <name type="primary">Tbc1d23</name>
</gene>
<keyword id="KW-0025">Alternative splicing</keyword>
<keyword id="KW-0968">Cytoplasmic vesicle</keyword>
<keyword id="KW-0217">Developmental protein</keyword>
<keyword id="KW-0333">Golgi apparatus</keyword>
<keyword id="KW-0597">Phosphoprotein</keyword>
<keyword id="KW-1185">Reference proteome</keyword>
<name>TBC23_MOUSE</name>
<dbReference type="EMBL" id="AK155142">
    <property type="protein sequence ID" value="BAE33073.1"/>
    <property type="molecule type" value="mRNA"/>
</dbReference>
<dbReference type="EMBL" id="AK171591">
    <property type="protein sequence ID" value="BAE42547.1"/>
    <property type="molecule type" value="mRNA"/>
</dbReference>
<dbReference type="EMBL" id="BC019762">
    <property type="protein sequence ID" value="AAH19762.1"/>
    <property type="molecule type" value="mRNA"/>
</dbReference>
<dbReference type="EMBL" id="BC031706">
    <property type="protein sequence ID" value="AAH31706.1"/>
    <property type="molecule type" value="mRNA"/>
</dbReference>
<dbReference type="CCDS" id="CCDS28228.1">
    <molecule id="Q8K0F1-1"/>
</dbReference>
<dbReference type="RefSeq" id="NP_080530.2">
    <molecule id="Q8K0F1-1"/>
    <property type="nucleotide sequence ID" value="NM_026254.2"/>
</dbReference>
<dbReference type="SMR" id="Q8K0F1"/>
<dbReference type="BioGRID" id="212290">
    <property type="interactions" value="1"/>
</dbReference>
<dbReference type="FunCoup" id="Q8K0F1">
    <property type="interactions" value="4732"/>
</dbReference>
<dbReference type="STRING" id="10090.ENSMUSP00000023431"/>
<dbReference type="GlyGen" id="Q8K0F1">
    <property type="glycosylation" value="1 site, 1 O-linked glycan (1 site)"/>
</dbReference>
<dbReference type="iPTMnet" id="Q8K0F1"/>
<dbReference type="PhosphoSitePlus" id="Q8K0F1"/>
<dbReference type="PaxDb" id="10090-ENSMUSP00000023431"/>
<dbReference type="PeptideAtlas" id="Q8K0F1"/>
<dbReference type="ProteomicsDB" id="254823">
    <molecule id="Q8K0F1-1"/>
</dbReference>
<dbReference type="ProteomicsDB" id="254824">
    <molecule id="Q8K0F1-2"/>
</dbReference>
<dbReference type="Pumba" id="Q8K0F1"/>
<dbReference type="Antibodypedia" id="46507">
    <property type="antibodies" value="68 antibodies from 22 providers"/>
</dbReference>
<dbReference type="DNASU" id="67581"/>
<dbReference type="Ensembl" id="ENSMUST00000023431.8">
    <molecule id="Q8K0F1-1"/>
    <property type="protein sequence ID" value="ENSMUSP00000023431.7"/>
    <property type="gene ID" value="ENSMUSG00000022749.9"/>
</dbReference>
<dbReference type="GeneID" id="67581"/>
<dbReference type="KEGG" id="mmu:67581"/>
<dbReference type="UCSC" id="uc007znb.1">
    <molecule id="Q8K0F1-1"/>
    <property type="organism name" value="mouse"/>
</dbReference>
<dbReference type="UCSC" id="uc007znd.1">
    <molecule id="Q8K0F1-2"/>
    <property type="organism name" value="mouse"/>
</dbReference>
<dbReference type="AGR" id="MGI:1914831"/>
<dbReference type="CTD" id="55773"/>
<dbReference type="MGI" id="MGI:1914831">
    <property type="gene designation" value="Tbc1d23"/>
</dbReference>
<dbReference type="VEuPathDB" id="HostDB:ENSMUSG00000022749"/>
<dbReference type="eggNOG" id="KOG3636">
    <property type="taxonomic scope" value="Eukaryota"/>
</dbReference>
<dbReference type="GeneTree" id="ENSGT00390000000191"/>
<dbReference type="HOGENOM" id="CLU_026555_0_0_1"/>
<dbReference type="InParanoid" id="Q8K0F1"/>
<dbReference type="OMA" id="CTMWDLY"/>
<dbReference type="PhylomeDB" id="Q8K0F1"/>
<dbReference type="TreeFam" id="TF105892"/>
<dbReference type="BioGRID-ORCS" id="67581">
    <property type="hits" value="2 hits in 76 CRISPR screens"/>
</dbReference>
<dbReference type="ChiTaRS" id="Tbc1d23">
    <property type="organism name" value="mouse"/>
</dbReference>
<dbReference type="PRO" id="PR:Q8K0F1"/>
<dbReference type="Proteomes" id="UP000000589">
    <property type="component" value="Chromosome 16"/>
</dbReference>
<dbReference type="RNAct" id="Q8K0F1">
    <property type="molecule type" value="protein"/>
</dbReference>
<dbReference type="Bgee" id="ENSMUSG00000022749">
    <property type="expression patterns" value="Expressed in granulocyte and 257 other cell types or tissues"/>
</dbReference>
<dbReference type="ExpressionAtlas" id="Q8K0F1">
    <property type="expression patterns" value="baseline and differential"/>
</dbReference>
<dbReference type="GO" id="GO:0031410">
    <property type="term" value="C:cytoplasmic vesicle"/>
    <property type="evidence" value="ECO:0000250"/>
    <property type="project" value="UniProtKB"/>
</dbReference>
<dbReference type="GO" id="GO:0005829">
    <property type="term" value="C:cytosol"/>
    <property type="evidence" value="ECO:0007669"/>
    <property type="project" value="GOC"/>
</dbReference>
<dbReference type="GO" id="GO:0005802">
    <property type="term" value="C:trans-Golgi network"/>
    <property type="evidence" value="ECO:0000250"/>
    <property type="project" value="UniProtKB"/>
</dbReference>
<dbReference type="GO" id="GO:0007420">
    <property type="term" value="P:brain development"/>
    <property type="evidence" value="ECO:0000250"/>
    <property type="project" value="UniProtKB"/>
</dbReference>
<dbReference type="GO" id="GO:1990403">
    <property type="term" value="P:embryonic brain development"/>
    <property type="evidence" value="ECO:0000315"/>
    <property type="project" value="UniProtKB"/>
</dbReference>
<dbReference type="GO" id="GO:0031175">
    <property type="term" value="P:neuron projection development"/>
    <property type="evidence" value="ECO:0000315"/>
    <property type="project" value="UniProtKB"/>
</dbReference>
<dbReference type="GO" id="GO:0032755">
    <property type="term" value="P:positive regulation of interleukin-6 production"/>
    <property type="evidence" value="ECO:0000315"/>
    <property type="project" value="MGI"/>
</dbReference>
<dbReference type="GO" id="GO:0050727">
    <property type="term" value="P:regulation of inflammatory response"/>
    <property type="evidence" value="ECO:0000315"/>
    <property type="project" value="MGI"/>
</dbReference>
<dbReference type="GO" id="GO:0032680">
    <property type="term" value="P:regulation of tumor necrosis factor production"/>
    <property type="evidence" value="ECO:0000315"/>
    <property type="project" value="MGI"/>
</dbReference>
<dbReference type="GO" id="GO:0042147">
    <property type="term" value="P:retrograde transport, endosome to Golgi"/>
    <property type="evidence" value="ECO:0007669"/>
    <property type="project" value="InterPro"/>
</dbReference>
<dbReference type="GO" id="GO:0099041">
    <property type="term" value="P:vesicle tethering to Golgi"/>
    <property type="evidence" value="ECO:0000250"/>
    <property type="project" value="UniProtKB"/>
</dbReference>
<dbReference type="GO" id="GO:0016192">
    <property type="term" value="P:vesicle-mediated transport"/>
    <property type="evidence" value="ECO:0000315"/>
    <property type="project" value="UniProtKB"/>
</dbReference>
<dbReference type="CDD" id="cd20788">
    <property type="entry name" value="TBC1D23_C-like"/>
    <property type="match status" value="1"/>
</dbReference>
<dbReference type="FunFam" id="1.10.472.80:FF:000017">
    <property type="entry name" value="TBC1 domain family member 23"/>
    <property type="match status" value="1"/>
</dbReference>
<dbReference type="FunFam" id="3.40.250.10:FF:000002">
    <property type="entry name" value="TBC1 domain family member 23"/>
    <property type="match status" value="1"/>
</dbReference>
<dbReference type="Gene3D" id="3.40.250.10">
    <property type="entry name" value="Rhodanese-like domain"/>
    <property type="match status" value="1"/>
</dbReference>
<dbReference type="Gene3D" id="1.10.472.80">
    <property type="entry name" value="Ypt/Rab-GAP domain of gyp1p, domain 3"/>
    <property type="match status" value="1"/>
</dbReference>
<dbReference type="InterPro" id="IPR000195">
    <property type="entry name" value="Rab-GAP-TBC_dom"/>
</dbReference>
<dbReference type="InterPro" id="IPR035969">
    <property type="entry name" value="Rab-GAP_TBC_sf"/>
</dbReference>
<dbReference type="InterPro" id="IPR001763">
    <property type="entry name" value="Rhodanese-like_dom"/>
</dbReference>
<dbReference type="InterPro" id="IPR036873">
    <property type="entry name" value="Rhodanese-like_dom_sf"/>
</dbReference>
<dbReference type="InterPro" id="IPR039755">
    <property type="entry name" value="TBC1D23"/>
</dbReference>
<dbReference type="InterPro" id="IPR045799">
    <property type="entry name" value="TBC1D23_C"/>
</dbReference>
<dbReference type="PANTHER" id="PTHR13297:SF5">
    <property type="entry name" value="TBC1 DOMAIN FAMILY MEMBER 23"/>
    <property type="match status" value="1"/>
</dbReference>
<dbReference type="PANTHER" id="PTHR13297">
    <property type="entry name" value="TBC1 DOMAIN FAMILY MEMBER 23-RELATED"/>
    <property type="match status" value="1"/>
</dbReference>
<dbReference type="Pfam" id="PF00566">
    <property type="entry name" value="RabGAP-TBC"/>
    <property type="match status" value="1"/>
</dbReference>
<dbReference type="Pfam" id="PF00581">
    <property type="entry name" value="Rhodanese"/>
    <property type="match status" value="1"/>
</dbReference>
<dbReference type="Pfam" id="PF19430">
    <property type="entry name" value="TBC1D23_C"/>
    <property type="match status" value="1"/>
</dbReference>
<dbReference type="SMART" id="SM00164">
    <property type="entry name" value="TBC"/>
    <property type="match status" value="1"/>
</dbReference>
<dbReference type="SUPFAM" id="SSF52821">
    <property type="entry name" value="Rhodanese/Cell cycle control phosphatase"/>
    <property type="match status" value="1"/>
</dbReference>
<dbReference type="SUPFAM" id="SSF47923">
    <property type="entry name" value="Ypt/Rab-GAP domain of gyp1p"/>
    <property type="match status" value="2"/>
</dbReference>
<dbReference type="PROSITE" id="PS50206">
    <property type="entry name" value="RHODANESE_3"/>
    <property type="match status" value="1"/>
</dbReference>
<dbReference type="PROSITE" id="PS50086">
    <property type="entry name" value="TBC_RABGAP"/>
    <property type="match status" value="1"/>
</dbReference>
<organism>
    <name type="scientific">Mus musculus</name>
    <name type="common">Mouse</name>
    <dbReference type="NCBI Taxonomy" id="10090"/>
    <lineage>
        <taxon>Eukaryota</taxon>
        <taxon>Metazoa</taxon>
        <taxon>Chordata</taxon>
        <taxon>Craniata</taxon>
        <taxon>Vertebrata</taxon>
        <taxon>Euteleostomi</taxon>
        <taxon>Mammalia</taxon>
        <taxon>Eutheria</taxon>
        <taxon>Euarchontoglires</taxon>
        <taxon>Glires</taxon>
        <taxon>Rodentia</taxon>
        <taxon>Myomorpha</taxon>
        <taxon>Muroidea</taxon>
        <taxon>Muridae</taxon>
        <taxon>Murinae</taxon>
        <taxon>Mus</taxon>
        <taxon>Mus</taxon>
    </lineage>
</organism>
<accession>Q8K0F1</accession>
<accession>Q3TAW9</accession>
<accession>Q8VE48</accession>
<protein>
    <recommendedName>
        <fullName>TBC1 domain family member 23</fullName>
    </recommendedName>
</protein>
<reference key="1">
    <citation type="journal article" date="2005" name="Science">
        <title>The transcriptional landscape of the mammalian genome.</title>
        <authorList>
            <person name="Carninci P."/>
            <person name="Kasukawa T."/>
            <person name="Katayama S."/>
            <person name="Gough J."/>
            <person name="Frith M.C."/>
            <person name="Maeda N."/>
            <person name="Oyama R."/>
            <person name="Ravasi T."/>
            <person name="Lenhard B."/>
            <person name="Wells C."/>
            <person name="Kodzius R."/>
            <person name="Shimokawa K."/>
            <person name="Bajic V.B."/>
            <person name="Brenner S.E."/>
            <person name="Batalov S."/>
            <person name="Forrest A.R."/>
            <person name="Zavolan M."/>
            <person name="Davis M.J."/>
            <person name="Wilming L.G."/>
            <person name="Aidinis V."/>
            <person name="Allen J.E."/>
            <person name="Ambesi-Impiombato A."/>
            <person name="Apweiler R."/>
            <person name="Aturaliya R.N."/>
            <person name="Bailey T.L."/>
            <person name="Bansal M."/>
            <person name="Baxter L."/>
            <person name="Beisel K.W."/>
            <person name="Bersano T."/>
            <person name="Bono H."/>
            <person name="Chalk A.M."/>
            <person name="Chiu K.P."/>
            <person name="Choudhary V."/>
            <person name="Christoffels A."/>
            <person name="Clutterbuck D.R."/>
            <person name="Crowe M.L."/>
            <person name="Dalla E."/>
            <person name="Dalrymple B.P."/>
            <person name="de Bono B."/>
            <person name="Della Gatta G."/>
            <person name="di Bernardo D."/>
            <person name="Down T."/>
            <person name="Engstrom P."/>
            <person name="Fagiolini M."/>
            <person name="Faulkner G."/>
            <person name="Fletcher C.F."/>
            <person name="Fukushima T."/>
            <person name="Furuno M."/>
            <person name="Futaki S."/>
            <person name="Gariboldi M."/>
            <person name="Georgii-Hemming P."/>
            <person name="Gingeras T.R."/>
            <person name="Gojobori T."/>
            <person name="Green R.E."/>
            <person name="Gustincich S."/>
            <person name="Harbers M."/>
            <person name="Hayashi Y."/>
            <person name="Hensch T.K."/>
            <person name="Hirokawa N."/>
            <person name="Hill D."/>
            <person name="Huminiecki L."/>
            <person name="Iacono M."/>
            <person name="Ikeo K."/>
            <person name="Iwama A."/>
            <person name="Ishikawa T."/>
            <person name="Jakt M."/>
            <person name="Kanapin A."/>
            <person name="Katoh M."/>
            <person name="Kawasawa Y."/>
            <person name="Kelso J."/>
            <person name="Kitamura H."/>
            <person name="Kitano H."/>
            <person name="Kollias G."/>
            <person name="Krishnan S.P."/>
            <person name="Kruger A."/>
            <person name="Kummerfeld S.K."/>
            <person name="Kurochkin I.V."/>
            <person name="Lareau L.F."/>
            <person name="Lazarevic D."/>
            <person name="Lipovich L."/>
            <person name="Liu J."/>
            <person name="Liuni S."/>
            <person name="McWilliam S."/>
            <person name="Madan Babu M."/>
            <person name="Madera M."/>
            <person name="Marchionni L."/>
            <person name="Matsuda H."/>
            <person name="Matsuzawa S."/>
            <person name="Miki H."/>
            <person name="Mignone F."/>
            <person name="Miyake S."/>
            <person name="Morris K."/>
            <person name="Mottagui-Tabar S."/>
            <person name="Mulder N."/>
            <person name="Nakano N."/>
            <person name="Nakauchi H."/>
            <person name="Ng P."/>
            <person name="Nilsson R."/>
            <person name="Nishiguchi S."/>
            <person name="Nishikawa S."/>
            <person name="Nori F."/>
            <person name="Ohara O."/>
            <person name="Okazaki Y."/>
            <person name="Orlando V."/>
            <person name="Pang K.C."/>
            <person name="Pavan W.J."/>
            <person name="Pavesi G."/>
            <person name="Pesole G."/>
            <person name="Petrovsky N."/>
            <person name="Piazza S."/>
            <person name="Reed J."/>
            <person name="Reid J.F."/>
            <person name="Ring B.Z."/>
            <person name="Ringwald M."/>
            <person name="Rost B."/>
            <person name="Ruan Y."/>
            <person name="Salzberg S.L."/>
            <person name="Sandelin A."/>
            <person name="Schneider C."/>
            <person name="Schoenbach C."/>
            <person name="Sekiguchi K."/>
            <person name="Semple C.A."/>
            <person name="Seno S."/>
            <person name="Sessa L."/>
            <person name="Sheng Y."/>
            <person name="Shibata Y."/>
            <person name="Shimada H."/>
            <person name="Shimada K."/>
            <person name="Silva D."/>
            <person name="Sinclair B."/>
            <person name="Sperling S."/>
            <person name="Stupka E."/>
            <person name="Sugiura K."/>
            <person name="Sultana R."/>
            <person name="Takenaka Y."/>
            <person name="Taki K."/>
            <person name="Tammoja K."/>
            <person name="Tan S.L."/>
            <person name="Tang S."/>
            <person name="Taylor M.S."/>
            <person name="Tegner J."/>
            <person name="Teichmann S.A."/>
            <person name="Ueda H.R."/>
            <person name="van Nimwegen E."/>
            <person name="Verardo R."/>
            <person name="Wei C.L."/>
            <person name="Yagi K."/>
            <person name="Yamanishi H."/>
            <person name="Zabarovsky E."/>
            <person name="Zhu S."/>
            <person name="Zimmer A."/>
            <person name="Hide W."/>
            <person name="Bult C."/>
            <person name="Grimmond S.M."/>
            <person name="Teasdale R.D."/>
            <person name="Liu E.T."/>
            <person name="Brusic V."/>
            <person name="Quackenbush J."/>
            <person name="Wahlestedt C."/>
            <person name="Mattick J.S."/>
            <person name="Hume D.A."/>
            <person name="Kai C."/>
            <person name="Sasaki D."/>
            <person name="Tomaru Y."/>
            <person name="Fukuda S."/>
            <person name="Kanamori-Katayama M."/>
            <person name="Suzuki M."/>
            <person name="Aoki J."/>
            <person name="Arakawa T."/>
            <person name="Iida J."/>
            <person name="Imamura K."/>
            <person name="Itoh M."/>
            <person name="Kato T."/>
            <person name="Kawaji H."/>
            <person name="Kawagashira N."/>
            <person name="Kawashima T."/>
            <person name="Kojima M."/>
            <person name="Kondo S."/>
            <person name="Konno H."/>
            <person name="Nakano K."/>
            <person name="Ninomiya N."/>
            <person name="Nishio T."/>
            <person name="Okada M."/>
            <person name="Plessy C."/>
            <person name="Shibata K."/>
            <person name="Shiraki T."/>
            <person name="Suzuki S."/>
            <person name="Tagami M."/>
            <person name="Waki K."/>
            <person name="Watahiki A."/>
            <person name="Okamura-Oho Y."/>
            <person name="Suzuki H."/>
            <person name="Kawai J."/>
            <person name="Hayashizaki Y."/>
        </authorList>
    </citation>
    <scope>NUCLEOTIDE SEQUENCE [LARGE SCALE MRNA] (ISOFORMS 1 AND 2)</scope>
    <source>
        <strain>C57BL/6J</strain>
        <strain>NOD</strain>
    </source>
</reference>
<reference key="2">
    <citation type="journal article" date="2004" name="Genome Res.">
        <title>The status, quality, and expansion of the NIH full-length cDNA project: the Mammalian Gene Collection (MGC).</title>
        <authorList>
            <consortium name="The MGC Project Team"/>
        </authorList>
    </citation>
    <scope>NUCLEOTIDE SEQUENCE [LARGE SCALE MRNA] (ISOFORM 1)</scope>
    <source>
        <strain>Czech II</strain>
        <strain>FVB/N</strain>
        <tissue>Liver</tissue>
        <tissue>Mammary tumor</tissue>
    </source>
</reference>
<reference key="3">
    <citation type="journal article" date="2010" name="Cell">
        <title>A tissue-specific atlas of mouse protein phosphorylation and expression.</title>
        <authorList>
            <person name="Huttlin E.L."/>
            <person name="Jedrychowski M.P."/>
            <person name="Elias J.E."/>
            <person name="Goswami T."/>
            <person name="Rad R."/>
            <person name="Beausoleil S.A."/>
            <person name="Villen J."/>
            <person name="Haas W."/>
            <person name="Sowa M.E."/>
            <person name="Gygi S.P."/>
        </authorList>
    </citation>
    <scope>PHOSPHORYLATION [LARGE SCALE ANALYSIS] AT SER-469</scope>
    <scope>IDENTIFICATION BY MASS SPECTROMETRY [LARGE SCALE ANALYSIS]</scope>
    <source>
        <tissue>Brain</tissue>
        <tissue>Kidney</tissue>
        <tissue>Lung</tissue>
        <tissue>Spleen</tissue>
        <tissue>Testis</tissue>
    </source>
</reference>
<reference key="4">
    <citation type="journal article" date="2012" name="J. Immunol.">
        <title>Spatiotemporal inhibition of innate immunity signaling by the Tbc1d23 RAB-GAP.</title>
        <authorList>
            <person name="De Arras L."/>
            <person name="Yang I.V."/>
            <person name="Lackford B."/>
            <person name="Riches D.W."/>
            <person name="Prekeris R."/>
            <person name="Freedman J.H."/>
            <person name="Schwartz D.A."/>
            <person name="Alper S."/>
        </authorList>
    </citation>
    <scope>FUNCTION</scope>
    <scope>DISRUPTION PHENOTYPE</scope>
    <scope>MUTAGENESIS OF ARG-50</scope>
</reference>
<reference key="5">
    <citation type="journal article" date="2017" name="Am. J. Hum. Genet.">
        <title>Homozygous truncating variants in TBC1D23 cause pontocerebellar hypoplasia and alter cortical development.</title>
        <authorList>
            <person name="Ivanova E.L."/>
            <person name="Mau-Them F.T."/>
            <person name="Riazuddin S."/>
            <person name="Kahrizi K."/>
            <person name="Laugel V."/>
            <person name="Schaefer E."/>
            <person name="de Saint Martin A."/>
            <person name="Runge K."/>
            <person name="Iqbal Z."/>
            <person name="Spitz M.A."/>
            <person name="Laura M."/>
            <person name="Drouot N."/>
            <person name="Gerard B."/>
            <person name="Deleuze J.F."/>
            <person name="de Brouwer A.P.M."/>
            <person name="Razzaq A."/>
            <person name="Dollfus H."/>
            <person name="Assir M.Z."/>
            <person name="Nitchke P."/>
            <person name="Hinckelmann M.V."/>
            <person name="Ropers H."/>
            <person name="Riazuddin S."/>
            <person name="Najmabadi H."/>
            <person name="van Bokhoven H."/>
            <person name="Chelly J."/>
        </authorList>
    </citation>
    <scope>FUNCTION</scope>
</reference>
<reference key="6">
    <citation type="journal article" date="2017" name="Nat. Cell Biol.">
        <title>TBC1D23 is a bridging factor for endosomal vesicle capture by golgins at the trans-Golgi.</title>
        <authorList>
            <person name="Shin J.J.H."/>
            <person name="Gillingham A.K."/>
            <person name="Begum F."/>
            <person name="Chadwick J."/>
            <person name="Munro S."/>
        </authorList>
    </citation>
    <scope>FUNCTION</scope>
    <scope>INTERACTION WITH C17ORF75; FAM91A1; FKBP15; GOLGA1; GOLGA4; WASHC2 AND WDR11</scope>
</reference>
<proteinExistence type="evidence at protein level"/>
<evidence type="ECO:0000250" key="1">
    <source>
        <dbReference type="UniProtKB" id="Q9NUY8"/>
    </source>
</evidence>
<evidence type="ECO:0000255" key="2">
    <source>
        <dbReference type="PROSITE-ProRule" id="PRU00163"/>
    </source>
</evidence>
<evidence type="ECO:0000255" key="3">
    <source>
        <dbReference type="PROSITE-ProRule" id="PRU00173"/>
    </source>
</evidence>
<evidence type="ECO:0000269" key="4">
    <source>
    </source>
</evidence>
<evidence type="ECO:0000269" key="5">
    <source>
    </source>
</evidence>
<evidence type="ECO:0000269" key="6">
    <source>
    </source>
</evidence>
<evidence type="ECO:0000303" key="7">
    <source>
    </source>
</evidence>
<evidence type="ECO:0007744" key="8">
    <source>
    </source>
</evidence>
<comment type="function">
    <text evidence="1 4 5 6">Putative Rab GTPase-activating protein which plays a role in vesicular trafficking. Involved in endosome-to-Golgi trafficking. Acts as a bridging protein by binding simultaneously to golgins, including GOLGA1 and GOLGA4, located at the trans-Golgi, and to the WASH complex, located on endosome-derived vesicles (PubMed:29084197). Together with WDR11 complex facilitates the golgin-mediated capture of vesicles generated using AP-1 (By similarity). Plays a role in brain development, including in cortical neuron positioning. May also be important for neurite outgrowth, possibly through its involvement in membrane trafficking and cargo delivery, 2 processes which are essential for axonal and dendritic growth (PubMed:28823707). May act as a general inhibitor of innate immunity signaling, strongly inhibiting multiple TLR and dectin/CLEC7A-signaling pathways. Does not alter initial activation events, but instead affects maintenance of inflammatory gene expression several hours after bacterial lipopolysaccharide (LPS) challenge (PubMed:22312129).</text>
</comment>
<comment type="subunit">
    <text evidence="6">Directly interacts with GOLGA1 and GOLGA4 (PubMed:29084197). Interacts with FAM91A1, C17ORF75 and WDR11; the interaction recruits TBC1D23 to AP-1-derived vesicles (PubMed:29084197). Directly interacts with WASHC1 and WASHC2/FAM21 (PubMed:29084197). Interacts with FKBP15 (PubMed:29084197).</text>
</comment>
<comment type="subcellular location">
    <subcellularLocation>
        <location evidence="6">Golgi apparatus</location>
        <location evidence="6">trans-Golgi network</location>
    </subcellularLocation>
    <subcellularLocation>
        <location evidence="1">Cytoplasmic vesicle</location>
    </subcellularLocation>
    <text evidence="1">Localization to the trans-Golgi (TGN) is regulated by ARL1 and ARL5B/ARL8. ARL1 increases Golgi localization, while ARL5B decreases it. Recruitment to the trans-Golgi network requires the presence of GOLGA1 and GOLGA4, but not that of FAM91A1 (By similarity). Recruited on AP-1-derived vesicles by WDR11 complex (By similarity).</text>
</comment>
<comment type="alternative products">
    <event type="alternative splicing"/>
    <isoform>
        <id>Q8K0F1-1</id>
        <name>1</name>
        <sequence type="displayed"/>
    </isoform>
    <isoform>
        <id>Q8K0F1-2</id>
        <name>2</name>
        <sequence type="described" ref="VSP_025520 VSP_025521"/>
    </isoform>
</comment>
<comment type="disruption phenotype">
    <text evidence="4">Mutant mice exhibit increased inflammatory cytokine production and recruit more inflammatory cells to the peritoneum, when challenged with different pathogen-associated molecular patterns (PAMPs), including LPS.</text>
</comment>
<sequence>MAEGEELLPLSTSGGDSWEKDLEEALEAGGCDLETLRNIIQGRPLPAELRAKVWKIALNVAGKGDSLASWDGILDLPEQNTIHKDCLEFIEQLSVPEEKAAELLLDIESVITFYCKSRSVKYSTSLSWIHLLKPLICLQLPRSDLYNCFYAVMNKYIPRDCSLKGRPFHLFRLLIQYHEPELCSFLDTKKITPDSYALNWLGSLFAHYCSTEVTQAIWDGYLQQADPFFIYFLMLIILVNTKEVILAQESDSKEEVIRFLESTPASLNLEDIEDLFSLAQYYCSKTPASFRKDNHHLFGSTLLGIKDDEADLSQALCLAVSVSEILQANQLQGEGVRFFVVDCRPAEQYNAGHLATAFHLDSDLMLQNPSEFAQSVKSLLEAQKQSIESGSIAGGEHLCFMGSGREEEDMYMNMVLAHFLQKNKEYVSIASGGFMALQQHLADINVEGPESGYGHWIASTSGSRGSISSVDGESCNGSNDRGMKSLVSKMTVALKTKSVTVREKVISFIENSSTPVDRHVSSSDRVGKPYRGVKPVFSIGDEEEYDTDEIDSSSMSDDDRKEVVNIQTWINKPDIKHHFPCKEVKESGHMFPSHLLVTATHMYCLREILSRKGLAYIQSRQALNSVVKITSKKKHPELITFKYGNSSASGIEILAIERYLIPNAGDATRAIKQQIMKVLDALES</sequence>